<protein>
    <recommendedName>
        <fullName evidence="1">Chaperonin GroEL</fullName>
        <ecNumber evidence="1">5.6.1.7</ecNumber>
    </recommendedName>
    <alternativeName>
        <fullName evidence="1">60 kDa chaperonin</fullName>
    </alternativeName>
    <alternativeName>
        <fullName evidence="1">Chaperonin-60</fullName>
        <shortName evidence="1">Cpn60</shortName>
    </alternativeName>
</protein>
<reference key="1">
    <citation type="submission" date="2005-09" db="EMBL/GenBank/DDBJ databases">
        <title>Complete genome sequence of Clostridium kluyveri and comparative genomics of Clostridia species.</title>
        <authorList>
            <person name="Inui M."/>
            <person name="Nonaka H."/>
            <person name="Shinoda Y."/>
            <person name="Ikenaga Y."/>
            <person name="Abe M."/>
            <person name="Naito K."/>
            <person name="Vertes A.A."/>
            <person name="Yukawa H."/>
        </authorList>
    </citation>
    <scope>NUCLEOTIDE SEQUENCE [LARGE SCALE GENOMIC DNA]</scope>
    <source>
        <strain>NBRC 12016</strain>
    </source>
</reference>
<gene>
    <name evidence="1" type="primary">groEL</name>
    <name evidence="1" type="synonym">groL</name>
    <name type="ordered locus">CKR_0409</name>
</gene>
<organism>
    <name type="scientific">Clostridium kluyveri (strain NBRC 12016)</name>
    <dbReference type="NCBI Taxonomy" id="583346"/>
    <lineage>
        <taxon>Bacteria</taxon>
        <taxon>Bacillati</taxon>
        <taxon>Bacillota</taxon>
        <taxon>Clostridia</taxon>
        <taxon>Eubacteriales</taxon>
        <taxon>Clostridiaceae</taxon>
        <taxon>Clostridium</taxon>
    </lineage>
</organism>
<proteinExistence type="inferred from homology"/>
<name>CH60_CLOK1</name>
<keyword id="KW-0067">ATP-binding</keyword>
<keyword id="KW-0143">Chaperone</keyword>
<keyword id="KW-0963">Cytoplasm</keyword>
<keyword id="KW-0413">Isomerase</keyword>
<keyword id="KW-0547">Nucleotide-binding</keyword>
<sequence>MAKSILFSEDARKKMQEGVDKLANTVKVTLGPKGRNVVLDKKFGSPLITNDGVTIAKEIELEEPYENMGAQLVKEVATKTNDVAGDGTTTATLLAQAIIREGLKNVTAGANPMLIRQGIKIAVDKAVEEIKKVSRTVNGKEDIARIAAISASDEEIGKLIADAMEKVGNEGVITVEESKTMGTELDVVEGMEFDRGYLSAYMVTDTEKMEAVLDDPYILITDKKISTIQDILPLLEKMVQQGKKLLIIAEDVEGEALTTLVVNKLRGTFTCVAVKAPGFGDRRKEMLQDIAILTDGKVISEELGRDLKEVSLEDLGRAESVKIDKENTTIVNGRGDKKSIQDRVSQIKAQIEETTSEFDKEKLQERLAKLSGGVAVIKVGAATETELKEKKMRIEDALAATKAGVEEGMGPGGGTAYVNAIPEVSKLTSDVADVKVGIDIITKALEEPVRQIAANAGVEGSVIIEKVKNSEPGVGYDVLTDKYVNMIDNGIVDPTKVTRSALQNAASVAATFLTTEAAVVDIPDKNNAAGLPGAPGMGGMDGMY</sequence>
<dbReference type="EC" id="5.6.1.7" evidence="1"/>
<dbReference type="EMBL" id="AP009049">
    <property type="protein sequence ID" value="BAH05460.1"/>
    <property type="molecule type" value="Genomic_DNA"/>
</dbReference>
<dbReference type="RefSeq" id="WP_011989033.1">
    <property type="nucleotide sequence ID" value="NC_011837.1"/>
</dbReference>
<dbReference type="SMR" id="B9DYY5"/>
<dbReference type="KEGG" id="ckr:CKR_0409"/>
<dbReference type="HOGENOM" id="CLU_016503_3_0_9"/>
<dbReference type="Proteomes" id="UP000007969">
    <property type="component" value="Chromosome"/>
</dbReference>
<dbReference type="GO" id="GO:0005737">
    <property type="term" value="C:cytoplasm"/>
    <property type="evidence" value="ECO:0007669"/>
    <property type="project" value="UniProtKB-SubCell"/>
</dbReference>
<dbReference type="GO" id="GO:0005524">
    <property type="term" value="F:ATP binding"/>
    <property type="evidence" value="ECO:0007669"/>
    <property type="project" value="UniProtKB-UniRule"/>
</dbReference>
<dbReference type="GO" id="GO:0140662">
    <property type="term" value="F:ATP-dependent protein folding chaperone"/>
    <property type="evidence" value="ECO:0007669"/>
    <property type="project" value="InterPro"/>
</dbReference>
<dbReference type="GO" id="GO:0016853">
    <property type="term" value="F:isomerase activity"/>
    <property type="evidence" value="ECO:0007669"/>
    <property type="project" value="UniProtKB-KW"/>
</dbReference>
<dbReference type="GO" id="GO:0051082">
    <property type="term" value="F:unfolded protein binding"/>
    <property type="evidence" value="ECO:0007669"/>
    <property type="project" value="UniProtKB-UniRule"/>
</dbReference>
<dbReference type="GO" id="GO:0042026">
    <property type="term" value="P:protein refolding"/>
    <property type="evidence" value="ECO:0007669"/>
    <property type="project" value="UniProtKB-UniRule"/>
</dbReference>
<dbReference type="CDD" id="cd03344">
    <property type="entry name" value="GroEL"/>
    <property type="match status" value="1"/>
</dbReference>
<dbReference type="FunFam" id="1.10.560.10:FF:000001">
    <property type="entry name" value="60 kDa chaperonin"/>
    <property type="match status" value="1"/>
</dbReference>
<dbReference type="FunFam" id="3.50.7.10:FF:000001">
    <property type="entry name" value="60 kDa chaperonin"/>
    <property type="match status" value="1"/>
</dbReference>
<dbReference type="Gene3D" id="3.50.7.10">
    <property type="entry name" value="GroEL"/>
    <property type="match status" value="1"/>
</dbReference>
<dbReference type="Gene3D" id="1.10.560.10">
    <property type="entry name" value="GroEL-like equatorial domain"/>
    <property type="match status" value="1"/>
</dbReference>
<dbReference type="Gene3D" id="3.30.260.10">
    <property type="entry name" value="TCP-1-like chaperonin intermediate domain"/>
    <property type="match status" value="1"/>
</dbReference>
<dbReference type="HAMAP" id="MF_00600">
    <property type="entry name" value="CH60"/>
    <property type="match status" value="1"/>
</dbReference>
<dbReference type="InterPro" id="IPR001844">
    <property type="entry name" value="Cpn60/GroEL"/>
</dbReference>
<dbReference type="InterPro" id="IPR002423">
    <property type="entry name" value="Cpn60/GroEL/TCP-1"/>
</dbReference>
<dbReference type="InterPro" id="IPR027409">
    <property type="entry name" value="GroEL-like_apical_dom_sf"/>
</dbReference>
<dbReference type="InterPro" id="IPR027413">
    <property type="entry name" value="GROEL-like_equatorial_sf"/>
</dbReference>
<dbReference type="InterPro" id="IPR027410">
    <property type="entry name" value="TCP-1-like_intermed_sf"/>
</dbReference>
<dbReference type="NCBIfam" id="TIGR02348">
    <property type="entry name" value="GroEL"/>
    <property type="match status" value="1"/>
</dbReference>
<dbReference type="NCBIfam" id="NF000592">
    <property type="entry name" value="PRK00013.1"/>
    <property type="match status" value="1"/>
</dbReference>
<dbReference type="NCBIfam" id="NF009487">
    <property type="entry name" value="PRK12849.1"/>
    <property type="match status" value="1"/>
</dbReference>
<dbReference type="NCBIfam" id="NF009488">
    <property type="entry name" value="PRK12850.1"/>
    <property type="match status" value="1"/>
</dbReference>
<dbReference type="NCBIfam" id="NF009489">
    <property type="entry name" value="PRK12851.1"/>
    <property type="match status" value="1"/>
</dbReference>
<dbReference type="PANTHER" id="PTHR45633">
    <property type="entry name" value="60 KDA HEAT SHOCK PROTEIN, MITOCHONDRIAL"/>
    <property type="match status" value="1"/>
</dbReference>
<dbReference type="Pfam" id="PF00118">
    <property type="entry name" value="Cpn60_TCP1"/>
    <property type="match status" value="1"/>
</dbReference>
<dbReference type="PRINTS" id="PR00298">
    <property type="entry name" value="CHAPERONIN60"/>
</dbReference>
<dbReference type="SUPFAM" id="SSF52029">
    <property type="entry name" value="GroEL apical domain-like"/>
    <property type="match status" value="1"/>
</dbReference>
<dbReference type="SUPFAM" id="SSF48592">
    <property type="entry name" value="GroEL equatorial domain-like"/>
    <property type="match status" value="1"/>
</dbReference>
<dbReference type="SUPFAM" id="SSF54849">
    <property type="entry name" value="GroEL-intermediate domain like"/>
    <property type="match status" value="1"/>
</dbReference>
<feature type="chain" id="PRO_1000147026" description="Chaperonin GroEL">
    <location>
        <begin position="1"/>
        <end position="544"/>
    </location>
</feature>
<feature type="binding site" evidence="1">
    <location>
        <begin position="29"/>
        <end position="32"/>
    </location>
    <ligand>
        <name>ATP</name>
        <dbReference type="ChEBI" id="CHEBI:30616"/>
    </ligand>
</feature>
<feature type="binding site" evidence="1">
    <location>
        <begin position="86"/>
        <end position="90"/>
    </location>
    <ligand>
        <name>ATP</name>
        <dbReference type="ChEBI" id="CHEBI:30616"/>
    </ligand>
</feature>
<feature type="binding site" evidence="1">
    <location>
        <position position="413"/>
    </location>
    <ligand>
        <name>ATP</name>
        <dbReference type="ChEBI" id="CHEBI:30616"/>
    </ligand>
</feature>
<feature type="binding site" evidence="1">
    <location>
        <begin position="477"/>
        <end position="479"/>
    </location>
    <ligand>
        <name>ATP</name>
        <dbReference type="ChEBI" id="CHEBI:30616"/>
    </ligand>
</feature>
<feature type="binding site" evidence="1">
    <location>
        <position position="493"/>
    </location>
    <ligand>
        <name>ATP</name>
        <dbReference type="ChEBI" id="CHEBI:30616"/>
    </ligand>
</feature>
<evidence type="ECO:0000255" key="1">
    <source>
        <dbReference type="HAMAP-Rule" id="MF_00600"/>
    </source>
</evidence>
<accession>B9DYY5</accession>
<comment type="function">
    <text evidence="1">Together with its co-chaperonin GroES, plays an essential role in assisting protein folding. The GroEL-GroES system forms a nano-cage that allows encapsulation of the non-native substrate proteins and provides a physical environment optimized to promote and accelerate protein folding.</text>
</comment>
<comment type="catalytic activity">
    <reaction evidence="1">
        <text>ATP + H2O + a folded polypeptide = ADP + phosphate + an unfolded polypeptide.</text>
        <dbReference type="EC" id="5.6.1.7"/>
    </reaction>
</comment>
<comment type="subunit">
    <text evidence="1">Forms a cylinder of 14 subunits composed of two heptameric rings stacked back-to-back. Interacts with the co-chaperonin GroES.</text>
</comment>
<comment type="subcellular location">
    <subcellularLocation>
        <location evidence="1">Cytoplasm</location>
    </subcellularLocation>
</comment>
<comment type="similarity">
    <text evidence="1">Belongs to the chaperonin (HSP60) family.</text>
</comment>